<comment type="function">
    <text evidence="1">Major component of the virion core that undergoes proteolytic processing during the immature virion (IV) to mature virion (MV) transition. Essential for the formation of a structurally normal core (By similarity).</text>
</comment>
<comment type="subcellular location">
    <subcellularLocation>
        <location evidence="1">Virion</location>
    </subcellularLocation>
    <text evidence="1">Localizes to the virion core wall.</text>
</comment>
<comment type="PTM">
    <text evidence="1">The precursor is cleaved to a mature protein during virion maturation. Proteolytic cleavage of major core proteins P4a (A10L), P4b (A3L), and VP8 (L4R), which occurs at a late stage of core formation, is required for production of infectious mature virions (MV) (By similarity).</text>
</comment>
<comment type="similarity">
    <text evidence="2">Belongs to the poxviridae protein P4b family.</text>
</comment>
<feature type="propeptide" id="PRO_0000040587" evidence="1">
    <location>
        <begin position="1"/>
        <end position="61"/>
    </location>
</feature>
<feature type="chain" id="PRO_0000040588" description="Major core protein 4b">
    <location>
        <begin position="62"/>
        <end position="657"/>
    </location>
</feature>
<name>P4B_FOWPN</name>
<dbReference type="EMBL" id="M25781">
    <property type="protein sequence ID" value="AAA43817.1"/>
    <property type="molecule type" value="Genomic_DNA"/>
</dbReference>
<dbReference type="EMBL" id="AJ005164">
    <property type="protein sequence ID" value="CAA06406.1"/>
    <property type="molecule type" value="Genomic_DNA"/>
</dbReference>
<dbReference type="EMBL" id="AF198100">
    <property type="protein sequence ID" value="AAF44511.1"/>
    <property type="molecule type" value="Genomic_DNA"/>
</dbReference>
<dbReference type="PIR" id="A31474">
    <property type="entry name" value="FOVZFV"/>
</dbReference>
<dbReference type="RefSeq" id="NP_039130.1">
    <property type="nucleotide sequence ID" value="NC_002188.1"/>
</dbReference>
<dbReference type="GeneID" id="1486715"/>
<dbReference type="KEGG" id="vg:1486715"/>
<dbReference type="Proteomes" id="UP000008597">
    <property type="component" value="Segment"/>
</dbReference>
<dbReference type="GO" id="GO:0044423">
    <property type="term" value="C:virion component"/>
    <property type="evidence" value="ECO:0007669"/>
    <property type="project" value="UniProtKB-KW"/>
</dbReference>
<dbReference type="InterPro" id="IPR004972">
    <property type="entry name" value="P4B"/>
</dbReference>
<dbReference type="Pfam" id="PF03292">
    <property type="entry name" value="Pox_P4B"/>
    <property type="match status" value="1"/>
</dbReference>
<organismHost>
    <name type="scientific">Vertebrata</name>
    <dbReference type="NCBI Taxonomy" id="7742"/>
</organismHost>
<gene>
    <name type="ordered locus">FPV167</name>
    <name type="ORF">FP4B</name>
</gene>
<protein>
    <recommendedName>
        <fullName>Major core protein 4b</fullName>
    </recommendedName>
    <alternativeName>
        <fullName>Virion core protein 4b</fullName>
        <shortName>p4b</shortName>
    </alternativeName>
</protein>
<reference key="1">
    <citation type="journal article" date="1989" name="Virology">
        <title>Analysis of the fowlpoxvirus gene encoding the 4b core polypeptide and demonstration that it possesses efficient promoter sequences.</title>
        <authorList>
            <person name="Binns M.M."/>
            <person name="Boursnell M.E.G."/>
            <person name="Tomley F.M."/>
            <person name="Campbell J."/>
        </authorList>
    </citation>
    <scope>NUCLEOTIDE SEQUENCE [GENOMIC DNA]</scope>
    <source>
        <strain>FP-9 / Isolate HP-444</strain>
    </source>
</reference>
<reference key="2">
    <citation type="journal article" date="1998" name="J. Virol.">
        <title>The 131-amino-acid repeat region of the essential 39-kilodalton core protein of fowlpox virus FP9, equivalent to vaccinia virus A4L protein, is nonessential and highly immunogenic.</title>
        <authorList>
            <person name="Boulanger D."/>
            <person name="Green P."/>
            <person name="Smith T."/>
            <person name="Czerny C.P."/>
            <person name="Skinner M.A."/>
        </authorList>
    </citation>
    <scope>NUCLEOTIDE SEQUENCE [GENOMIC DNA]</scope>
    <source>
        <strain>FP-9 / Isolate HP-440</strain>
    </source>
</reference>
<reference key="3">
    <citation type="journal article" date="2000" name="J. Virol.">
        <title>The genome of fowlpox virus.</title>
        <authorList>
            <person name="Afonso C.L."/>
            <person name="Tulman E.R."/>
            <person name="Lu Z."/>
            <person name="Zsak L."/>
            <person name="Kutish G.F."/>
            <person name="Rock D.L."/>
        </authorList>
    </citation>
    <scope>NUCLEOTIDE SEQUENCE [LARGE SCALE GENOMIC DNA]</scope>
</reference>
<keyword id="KW-1185">Reference proteome</keyword>
<keyword id="KW-0946">Virion</keyword>
<organism>
    <name type="scientific">Fowlpox virus (strain NVSL)</name>
    <name type="common">FPV</name>
    <dbReference type="NCBI Taxonomy" id="928301"/>
    <lineage>
        <taxon>Viruses</taxon>
        <taxon>Varidnaviria</taxon>
        <taxon>Bamfordvirae</taxon>
        <taxon>Nucleocytoviricota</taxon>
        <taxon>Pokkesviricetes</taxon>
        <taxon>Chitovirales</taxon>
        <taxon>Poxviridae</taxon>
        <taxon>Chordopoxvirinae</taxon>
        <taxon>Avipoxvirus</taxon>
        <taxon>Fowlpox virus</taxon>
    </lineage>
</organism>
<proteinExistence type="inferred from homology"/>
<sequence length="657" mass="75217">MESDSNIAIEEVKYPNILLEPVYYNNLEVIGSHLHKPDKNNLCNVCDVLNKITEEDVISAGAKQQRPMRLRSKPKPDICKGVSDSVKQKNTIINIDEITSTHDWQYNLRKDADAIVRYLMDRKCDINNFTIQDLIRVMRELNIIRNERQELFELLSHVKGSLSSNSVSVKTSHPLMVIYSHSDNKIGEQLKLLENTYDPSRYQALIDTTRFQSTNFVDMSTSSDMLFRFKDQDSIGYVHPILVALFGVKLPALENAMVLGDSYSLMKQLYNSKKVKPENYMLLINRLTEDSPIIFTGINDSVSSEIHRASIHTMLRKTILNLRLGIFYSKDCDLVDNHLMKIIHINSSQMMADEEQMLASILSIVGFRPALVSITDPYQPLNVVLKPVSYIVVSPSKMITTINNPISINSNSIYSLSFDNTTGRVMFMPANMRYQGTISCRTVDALPVLNSISHDRIINSPVIVNGTLIYYIERRQNKNIVSGECFTGFRSVINDRPMDIANELNINGITYLLKSAVCYKTHDLLSTMSGSCDGGDVFLKGYYTILFTEMGPWMYDPLSIYSKQSRESRLMRVMKNQYYKEHGNDDGMFYDWLKEESTKKLCDIKQQQLMHHTVMFEDDLLSHEEAMNLISRNCCILVYAQDYLPYLATKSITEIFV</sequence>
<evidence type="ECO:0000250" key="1"/>
<evidence type="ECO:0000305" key="2"/>
<accession>P17355</accession>